<organism>
    <name type="scientific">Ectopseudomonas mendocina (strain ymp)</name>
    <name type="common">Pseudomonas mendocina</name>
    <dbReference type="NCBI Taxonomy" id="399739"/>
    <lineage>
        <taxon>Bacteria</taxon>
        <taxon>Pseudomonadati</taxon>
        <taxon>Pseudomonadota</taxon>
        <taxon>Gammaproteobacteria</taxon>
        <taxon>Pseudomonadales</taxon>
        <taxon>Pseudomonadaceae</taxon>
        <taxon>Ectopseudomonas</taxon>
    </lineage>
</organism>
<feature type="chain" id="PRO_1000054284" description="Multifunctional CCA protein">
    <location>
        <begin position="1"/>
        <end position="410"/>
    </location>
</feature>
<feature type="domain" description="HD" evidence="1">
    <location>
        <begin position="228"/>
        <end position="329"/>
    </location>
</feature>
<feature type="binding site" evidence="1">
    <location>
        <position position="8"/>
    </location>
    <ligand>
        <name>ATP</name>
        <dbReference type="ChEBI" id="CHEBI:30616"/>
    </ligand>
</feature>
<feature type="binding site" evidence="1">
    <location>
        <position position="8"/>
    </location>
    <ligand>
        <name>CTP</name>
        <dbReference type="ChEBI" id="CHEBI:37563"/>
    </ligand>
</feature>
<feature type="binding site" evidence="1">
    <location>
        <position position="11"/>
    </location>
    <ligand>
        <name>ATP</name>
        <dbReference type="ChEBI" id="CHEBI:30616"/>
    </ligand>
</feature>
<feature type="binding site" evidence="1">
    <location>
        <position position="11"/>
    </location>
    <ligand>
        <name>CTP</name>
        <dbReference type="ChEBI" id="CHEBI:37563"/>
    </ligand>
</feature>
<feature type="binding site" evidence="1">
    <location>
        <position position="21"/>
    </location>
    <ligand>
        <name>Mg(2+)</name>
        <dbReference type="ChEBI" id="CHEBI:18420"/>
    </ligand>
</feature>
<feature type="binding site" evidence="1">
    <location>
        <position position="23"/>
    </location>
    <ligand>
        <name>Mg(2+)</name>
        <dbReference type="ChEBI" id="CHEBI:18420"/>
    </ligand>
</feature>
<feature type="binding site" evidence="1">
    <location>
        <position position="91"/>
    </location>
    <ligand>
        <name>ATP</name>
        <dbReference type="ChEBI" id="CHEBI:30616"/>
    </ligand>
</feature>
<feature type="binding site" evidence="1">
    <location>
        <position position="91"/>
    </location>
    <ligand>
        <name>CTP</name>
        <dbReference type="ChEBI" id="CHEBI:37563"/>
    </ligand>
</feature>
<feature type="binding site" evidence="1">
    <location>
        <position position="137"/>
    </location>
    <ligand>
        <name>ATP</name>
        <dbReference type="ChEBI" id="CHEBI:30616"/>
    </ligand>
</feature>
<feature type="binding site" evidence="1">
    <location>
        <position position="137"/>
    </location>
    <ligand>
        <name>CTP</name>
        <dbReference type="ChEBI" id="CHEBI:37563"/>
    </ligand>
</feature>
<feature type="binding site" evidence="1">
    <location>
        <position position="140"/>
    </location>
    <ligand>
        <name>ATP</name>
        <dbReference type="ChEBI" id="CHEBI:30616"/>
    </ligand>
</feature>
<feature type="binding site" evidence="1">
    <location>
        <position position="140"/>
    </location>
    <ligand>
        <name>CTP</name>
        <dbReference type="ChEBI" id="CHEBI:37563"/>
    </ligand>
</feature>
<accession>A4XZK2</accession>
<sequence length="410" mass="45767">MQIYKVGGAVRDRLLGRPVSEVDWVVVGASAEQMLELGYRPVGADFPVFLHPQTGEEYALARTERKSGRGYGGFTFHASPEVTLEEDLIRRDLSVNAMAEDEQGKLIDPYGGQQDLAARILRHVSPAFAEDPLRVLRVARFAARYAPLGFHVADETLGLMRQLAESGELAHLTAERSWKEISRALMEPRPDVFIQVLRDCGALAALLPEVDDLFGVPQPEAHHPEIDTGVHVLSVLRQCAEHDQPLSVRWACLLHDVGKGLTPEAEWPRHIAHEHKGLRLIQAINERCKAPRDCAELAMLVGEFHTHGHRALELRPSTLLELLQRFDVFRRPQRFAEFVAACEMDARGRHGLEQRQYPQAAYLLGAAEAARQVPVKPLLEKGLKGAELGEALNRERLRALKAYKAQHAPS</sequence>
<comment type="function">
    <text evidence="1">Catalyzes the addition and repair of the essential 3'-terminal CCA sequence in tRNAs without using a nucleic acid template. Adds these three nucleotides in the order of C, C, and A to the tRNA nucleotide-73, using CTP and ATP as substrates and producing inorganic pyrophosphate. tRNA 3'-terminal CCA addition is required both for tRNA processing and repair. Also involved in tRNA surveillance by mediating tandem CCA addition to generate a CCACCA at the 3' terminus of unstable tRNAs. While stable tRNAs receive only 3'-terminal CCA, unstable tRNAs are marked with CCACCA and rapidly degraded.</text>
</comment>
<comment type="catalytic activity">
    <reaction evidence="1">
        <text>a tRNA precursor + 2 CTP + ATP = a tRNA with a 3' CCA end + 3 diphosphate</text>
        <dbReference type="Rhea" id="RHEA:14433"/>
        <dbReference type="Rhea" id="RHEA-COMP:10465"/>
        <dbReference type="Rhea" id="RHEA-COMP:10468"/>
        <dbReference type="ChEBI" id="CHEBI:30616"/>
        <dbReference type="ChEBI" id="CHEBI:33019"/>
        <dbReference type="ChEBI" id="CHEBI:37563"/>
        <dbReference type="ChEBI" id="CHEBI:74896"/>
        <dbReference type="ChEBI" id="CHEBI:83071"/>
        <dbReference type="EC" id="2.7.7.72"/>
    </reaction>
</comment>
<comment type="catalytic activity">
    <reaction evidence="1">
        <text>a tRNA with a 3' CCA end + 2 CTP + ATP = a tRNA with a 3' CCACCA end + 3 diphosphate</text>
        <dbReference type="Rhea" id="RHEA:76235"/>
        <dbReference type="Rhea" id="RHEA-COMP:10468"/>
        <dbReference type="Rhea" id="RHEA-COMP:18655"/>
        <dbReference type="ChEBI" id="CHEBI:30616"/>
        <dbReference type="ChEBI" id="CHEBI:33019"/>
        <dbReference type="ChEBI" id="CHEBI:37563"/>
        <dbReference type="ChEBI" id="CHEBI:83071"/>
        <dbReference type="ChEBI" id="CHEBI:195187"/>
    </reaction>
    <physiologicalReaction direction="left-to-right" evidence="1">
        <dbReference type="Rhea" id="RHEA:76236"/>
    </physiologicalReaction>
</comment>
<comment type="cofactor">
    <cofactor evidence="1">
        <name>Mg(2+)</name>
        <dbReference type="ChEBI" id="CHEBI:18420"/>
    </cofactor>
    <text evidence="1">Magnesium is required for nucleotidyltransferase activity.</text>
</comment>
<comment type="cofactor">
    <cofactor evidence="1">
        <name>Ni(2+)</name>
        <dbReference type="ChEBI" id="CHEBI:49786"/>
    </cofactor>
    <text evidence="1">Nickel for phosphatase activity.</text>
</comment>
<comment type="subunit">
    <text evidence="1">Monomer. Can also form homodimers and oligomers.</text>
</comment>
<comment type="domain">
    <text evidence="1">Comprises two domains: an N-terminal domain containing the nucleotidyltransferase activity and a C-terminal HD domain associated with both phosphodiesterase and phosphatase activities.</text>
</comment>
<comment type="miscellaneous">
    <text evidence="1">A single active site specifically recognizes both ATP and CTP and is responsible for their addition.</text>
</comment>
<comment type="similarity">
    <text evidence="1">Belongs to the tRNA nucleotidyltransferase/poly(A) polymerase family. Bacterial CCA-adding enzyme type 1 subfamily.</text>
</comment>
<name>CCA_ECTM1</name>
<keyword id="KW-0067">ATP-binding</keyword>
<keyword id="KW-0378">Hydrolase</keyword>
<keyword id="KW-0460">Magnesium</keyword>
<keyword id="KW-0479">Metal-binding</keyword>
<keyword id="KW-0511">Multifunctional enzyme</keyword>
<keyword id="KW-0533">Nickel</keyword>
<keyword id="KW-0547">Nucleotide-binding</keyword>
<keyword id="KW-0548">Nucleotidyltransferase</keyword>
<keyword id="KW-0692">RNA repair</keyword>
<keyword id="KW-0694">RNA-binding</keyword>
<keyword id="KW-0808">Transferase</keyword>
<keyword id="KW-0819">tRNA processing</keyword>
<proteinExistence type="inferred from homology"/>
<dbReference type="EC" id="2.7.7.72" evidence="1"/>
<dbReference type="EC" id="3.1.3.-" evidence="1"/>
<dbReference type="EC" id="3.1.4.-" evidence="1"/>
<dbReference type="EMBL" id="CP000680">
    <property type="protein sequence ID" value="ABP86768.1"/>
    <property type="molecule type" value="Genomic_DNA"/>
</dbReference>
<dbReference type="SMR" id="A4XZK2"/>
<dbReference type="STRING" id="399739.Pmen_4021"/>
<dbReference type="KEGG" id="pmy:Pmen_4021"/>
<dbReference type="PATRIC" id="fig|399739.8.peg.4074"/>
<dbReference type="eggNOG" id="COG0617">
    <property type="taxonomic scope" value="Bacteria"/>
</dbReference>
<dbReference type="HOGENOM" id="CLU_015961_1_1_6"/>
<dbReference type="OrthoDB" id="9805698at2"/>
<dbReference type="GO" id="GO:0005524">
    <property type="term" value="F:ATP binding"/>
    <property type="evidence" value="ECO:0007669"/>
    <property type="project" value="UniProtKB-UniRule"/>
</dbReference>
<dbReference type="GO" id="GO:0004810">
    <property type="term" value="F:CCA tRNA nucleotidyltransferase activity"/>
    <property type="evidence" value="ECO:0007669"/>
    <property type="project" value="UniProtKB-UniRule"/>
</dbReference>
<dbReference type="GO" id="GO:0004112">
    <property type="term" value="F:cyclic-nucleotide phosphodiesterase activity"/>
    <property type="evidence" value="ECO:0007669"/>
    <property type="project" value="UniProtKB-UniRule"/>
</dbReference>
<dbReference type="GO" id="GO:0000287">
    <property type="term" value="F:magnesium ion binding"/>
    <property type="evidence" value="ECO:0007669"/>
    <property type="project" value="UniProtKB-UniRule"/>
</dbReference>
<dbReference type="GO" id="GO:0016791">
    <property type="term" value="F:phosphatase activity"/>
    <property type="evidence" value="ECO:0007669"/>
    <property type="project" value="UniProtKB-UniRule"/>
</dbReference>
<dbReference type="GO" id="GO:0000049">
    <property type="term" value="F:tRNA binding"/>
    <property type="evidence" value="ECO:0007669"/>
    <property type="project" value="UniProtKB-UniRule"/>
</dbReference>
<dbReference type="GO" id="GO:0042245">
    <property type="term" value="P:RNA repair"/>
    <property type="evidence" value="ECO:0007669"/>
    <property type="project" value="UniProtKB-KW"/>
</dbReference>
<dbReference type="GO" id="GO:0001680">
    <property type="term" value="P:tRNA 3'-terminal CCA addition"/>
    <property type="evidence" value="ECO:0007669"/>
    <property type="project" value="UniProtKB-UniRule"/>
</dbReference>
<dbReference type="CDD" id="cd00077">
    <property type="entry name" value="HDc"/>
    <property type="match status" value="1"/>
</dbReference>
<dbReference type="CDD" id="cd05398">
    <property type="entry name" value="NT_ClassII-CCAase"/>
    <property type="match status" value="1"/>
</dbReference>
<dbReference type="FunFam" id="1.10.3090.10:FF:000001">
    <property type="entry name" value="Multifunctional CCA protein"/>
    <property type="match status" value="1"/>
</dbReference>
<dbReference type="Gene3D" id="3.30.460.10">
    <property type="entry name" value="Beta Polymerase, domain 2"/>
    <property type="match status" value="1"/>
</dbReference>
<dbReference type="Gene3D" id="1.10.3090.10">
    <property type="entry name" value="cca-adding enzyme, domain 2"/>
    <property type="match status" value="1"/>
</dbReference>
<dbReference type="HAMAP" id="MF_01261">
    <property type="entry name" value="CCA_bact_type1"/>
    <property type="match status" value="1"/>
</dbReference>
<dbReference type="HAMAP" id="MF_01262">
    <property type="entry name" value="CCA_bact_type2"/>
    <property type="match status" value="1"/>
</dbReference>
<dbReference type="InterPro" id="IPR012006">
    <property type="entry name" value="CCA_bact"/>
</dbReference>
<dbReference type="InterPro" id="IPR003607">
    <property type="entry name" value="HD/PDEase_dom"/>
</dbReference>
<dbReference type="InterPro" id="IPR006674">
    <property type="entry name" value="HD_domain"/>
</dbReference>
<dbReference type="InterPro" id="IPR043519">
    <property type="entry name" value="NT_sf"/>
</dbReference>
<dbReference type="InterPro" id="IPR002646">
    <property type="entry name" value="PolA_pol_head_dom"/>
</dbReference>
<dbReference type="InterPro" id="IPR032828">
    <property type="entry name" value="PolyA_RNA-bd"/>
</dbReference>
<dbReference type="InterPro" id="IPR050124">
    <property type="entry name" value="tRNA_CCA-adding_enzyme"/>
</dbReference>
<dbReference type="NCBIfam" id="NF008137">
    <property type="entry name" value="PRK10885.1"/>
    <property type="match status" value="1"/>
</dbReference>
<dbReference type="PANTHER" id="PTHR47545">
    <property type="entry name" value="MULTIFUNCTIONAL CCA PROTEIN"/>
    <property type="match status" value="1"/>
</dbReference>
<dbReference type="PANTHER" id="PTHR47545:SF1">
    <property type="entry name" value="MULTIFUNCTIONAL CCA PROTEIN"/>
    <property type="match status" value="1"/>
</dbReference>
<dbReference type="Pfam" id="PF01966">
    <property type="entry name" value="HD"/>
    <property type="match status" value="1"/>
</dbReference>
<dbReference type="Pfam" id="PF01743">
    <property type="entry name" value="PolyA_pol"/>
    <property type="match status" value="1"/>
</dbReference>
<dbReference type="Pfam" id="PF12627">
    <property type="entry name" value="PolyA_pol_RNAbd"/>
    <property type="match status" value="1"/>
</dbReference>
<dbReference type="PIRSF" id="PIRSF000813">
    <property type="entry name" value="CCA_bact"/>
    <property type="match status" value="1"/>
</dbReference>
<dbReference type="SUPFAM" id="SSF81301">
    <property type="entry name" value="Nucleotidyltransferase"/>
    <property type="match status" value="1"/>
</dbReference>
<dbReference type="SUPFAM" id="SSF81891">
    <property type="entry name" value="Poly A polymerase C-terminal region-like"/>
    <property type="match status" value="1"/>
</dbReference>
<dbReference type="PROSITE" id="PS51831">
    <property type="entry name" value="HD"/>
    <property type="match status" value="1"/>
</dbReference>
<reference key="1">
    <citation type="submission" date="2007-04" db="EMBL/GenBank/DDBJ databases">
        <title>Complete sequence of Pseudomonas mendocina ymp.</title>
        <authorList>
            <consortium name="US DOE Joint Genome Institute"/>
            <person name="Copeland A."/>
            <person name="Lucas S."/>
            <person name="Lapidus A."/>
            <person name="Barry K."/>
            <person name="Glavina del Rio T."/>
            <person name="Dalin E."/>
            <person name="Tice H."/>
            <person name="Pitluck S."/>
            <person name="Kiss H."/>
            <person name="Brettin T."/>
            <person name="Detter J.C."/>
            <person name="Bruce D."/>
            <person name="Han C."/>
            <person name="Schmutz J."/>
            <person name="Larimer F."/>
            <person name="Land M."/>
            <person name="Hauser L."/>
            <person name="Kyrpides N."/>
            <person name="Mikhailova N."/>
            <person name="Hersman L."/>
            <person name="Dubois J."/>
            <person name="Maurice P."/>
            <person name="Richardson P."/>
        </authorList>
    </citation>
    <scope>NUCLEOTIDE SEQUENCE [LARGE SCALE GENOMIC DNA]</scope>
    <source>
        <strain>ymp</strain>
    </source>
</reference>
<gene>
    <name evidence="1" type="primary">cca</name>
    <name type="ordered locus">Pmen_4021</name>
</gene>
<protein>
    <recommendedName>
        <fullName evidence="1">Multifunctional CCA protein</fullName>
    </recommendedName>
    <domain>
        <recommendedName>
            <fullName evidence="1">CCA-adding enzyme</fullName>
            <ecNumber evidence="1">2.7.7.72</ecNumber>
        </recommendedName>
        <alternativeName>
            <fullName evidence="1">CCA tRNA nucleotidyltransferase</fullName>
        </alternativeName>
        <alternativeName>
            <fullName evidence="1">tRNA CCA-pyrophosphorylase</fullName>
        </alternativeName>
        <alternativeName>
            <fullName evidence="1">tRNA adenylyl-/cytidylyl-transferase</fullName>
        </alternativeName>
        <alternativeName>
            <fullName evidence="1">tRNA nucleotidyltransferase</fullName>
        </alternativeName>
        <alternativeName>
            <fullName evidence="1">tRNA-NT</fullName>
        </alternativeName>
    </domain>
    <domain>
        <recommendedName>
            <fullName evidence="1">2'-nucleotidase</fullName>
            <ecNumber evidence="1">3.1.3.-</ecNumber>
        </recommendedName>
    </domain>
    <domain>
        <recommendedName>
            <fullName evidence="1">2',3'-cyclic phosphodiesterase</fullName>
            <ecNumber evidence="1">3.1.4.-</ecNumber>
        </recommendedName>
    </domain>
    <domain>
        <recommendedName>
            <fullName evidence="1">Phosphatase</fullName>
            <ecNumber evidence="1">3.1.3.-</ecNumber>
        </recommendedName>
    </domain>
</protein>
<evidence type="ECO:0000255" key="1">
    <source>
        <dbReference type="HAMAP-Rule" id="MF_01261"/>
    </source>
</evidence>